<evidence type="ECO:0000255" key="1">
    <source>
        <dbReference type="HAMAP-Rule" id="MF_00298"/>
    </source>
</evidence>
<accession>Q6G0S2</accession>
<name>RPPH_BARQU</name>
<organism>
    <name type="scientific">Bartonella quintana (strain Toulouse)</name>
    <name type="common">Rochalimaea quintana</name>
    <dbReference type="NCBI Taxonomy" id="283165"/>
    <lineage>
        <taxon>Bacteria</taxon>
        <taxon>Pseudomonadati</taxon>
        <taxon>Pseudomonadota</taxon>
        <taxon>Alphaproteobacteria</taxon>
        <taxon>Hyphomicrobiales</taxon>
        <taxon>Bartonellaceae</taxon>
        <taxon>Bartonella</taxon>
    </lineage>
</organism>
<sequence>MDTDINLKNLPYRRCVGVVVFNHEGKVWVGRRLTKYAHADTEMSHRWQLPQGGIDEGEEPLDAACRELYEETGIRSIKLIKEARDWFYYDFPQKLVGCTLKNKYRGQIQKWFAFQFTGKLSEIATNPPPDDNKAEFDQWKWVDLEALPSIVISFKKHVYRKVVSEFRGSFRCL</sequence>
<protein>
    <recommendedName>
        <fullName evidence="1">RNA pyrophosphohydrolase</fullName>
        <ecNumber evidence="1">3.6.1.-</ecNumber>
    </recommendedName>
    <alternativeName>
        <fullName evidence="1">(Di)nucleoside polyphosphate hydrolase</fullName>
    </alternativeName>
</protein>
<gene>
    <name evidence="1" type="primary">rppH</name>
    <name evidence="1" type="synonym">nudH</name>
    <name type="ordered locus">BQ01540</name>
</gene>
<proteinExistence type="inferred from homology"/>
<comment type="function">
    <text evidence="1">Accelerates the degradation of transcripts by removing pyrophosphate from the 5'-end of triphosphorylated RNA, leading to a more labile monophosphorylated state that can stimulate subsequent ribonuclease cleavage.</text>
</comment>
<comment type="cofactor">
    <cofactor evidence="1">
        <name>a divalent metal cation</name>
        <dbReference type="ChEBI" id="CHEBI:60240"/>
    </cofactor>
</comment>
<comment type="similarity">
    <text evidence="1">Belongs to the Nudix hydrolase family. RppH subfamily.</text>
</comment>
<keyword id="KW-0378">Hydrolase</keyword>
<feature type="chain" id="PRO_0000231897" description="RNA pyrophosphohydrolase">
    <location>
        <begin position="1"/>
        <end position="173"/>
    </location>
</feature>
<feature type="domain" description="Nudix hydrolase" evidence="1">
    <location>
        <begin position="11"/>
        <end position="164"/>
    </location>
</feature>
<feature type="short sequence motif" description="Nudix box">
    <location>
        <begin position="52"/>
        <end position="73"/>
    </location>
</feature>
<dbReference type="EC" id="3.6.1.-" evidence="1"/>
<dbReference type="EMBL" id="BX897700">
    <property type="protein sequence ID" value="CAF25657.1"/>
    <property type="molecule type" value="Genomic_DNA"/>
</dbReference>
<dbReference type="RefSeq" id="WP_011178973.1">
    <property type="nucleotide sequence ID" value="NC_005955.1"/>
</dbReference>
<dbReference type="SMR" id="Q6G0S2"/>
<dbReference type="KEGG" id="bqu:BQ01540"/>
<dbReference type="eggNOG" id="COG0494">
    <property type="taxonomic scope" value="Bacteria"/>
</dbReference>
<dbReference type="HOGENOM" id="CLU_087195_3_0_5"/>
<dbReference type="OrthoDB" id="9816040at2"/>
<dbReference type="Proteomes" id="UP000000597">
    <property type="component" value="Chromosome"/>
</dbReference>
<dbReference type="GO" id="GO:0034432">
    <property type="term" value="F:bis(5'-adenosyl)-pentaphosphatase activity"/>
    <property type="evidence" value="ECO:0007669"/>
    <property type="project" value="TreeGrafter"/>
</dbReference>
<dbReference type="GO" id="GO:0008893">
    <property type="term" value="F:guanosine-3',5'-bis(diphosphate) 3'-diphosphatase activity"/>
    <property type="evidence" value="ECO:0007669"/>
    <property type="project" value="TreeGrafter"/>
</dbReference>
<dbReference type="GO" id="GO:0006753">
    <property type="term" value="P:nucleoside phosphate metabolic process"/>
    <property type="evidence" value="ECO:0007669"/>
    <property type="project" value="TreeGrafter"/>
</dbReference>
<dbReference type="GO" id="GO:0019693">
    <property type="term" value="P:ribose phosphate metabolic process"/>
    <property type="evidence" value="ECO:0007669"/>
    <property type="project" value="TreeGrafter"/>
</dbReference>
<dbReference type="CDD" id="cd03671">
    <property type="entry name" value="NUDIX_Ap4A_hydrolase_plant_like"/>
    <property type="match status" value="1"/>
</dbReference>
<dbReference type="Gene3D" id="3.90.79.10">
    <property type="entry name" value="Nucleoside Triphosphate Pyrophosphohydrolase"/>
    <property type="match status" value="1"/>
</dbReference>
<dbReference type="HAMAP" id="MF_00298">
    <property type="entry name" value="Nudix_RppH"/>
    <property type="match status" value="1"/>
</dbReference>
<dbReference type="InterPro" id="IPR020476">
    <property type="entry name" value="Nudix_hydrolase"/>
</dbReference>
<dbReference type="InterPro" id="IPR015797">
    <property type="entry name" value="NUDIX_hydrolase-like_dom_sf"/>
</dbReference>
<dbReference type="InterPro" id="IPR020084">
    <property type="entry name" value="NUDIX_hydrolase_CS"/>
</dbReference>
<dbReference type="InterPro" id="IPR000086">
    <property type="entry name" value="NUDIX_hydrolase_dom"/>
</dbReference>
<dbReference type="InterPro" id="IPR022927">
    <property type="entry name" value="RppH"/>
</dbReference>
<dbReference type="NCBIfam" id="NF001938">
    <property type="entry name" value="PRK00714.1-5"/>
    <property type="match status" value="1"/>
</dbReference>
<dbReference type="PANTHER" id="PTHR11839:SF22">
    <property type="entry name" value="NUDIX HYDROLASE 26, CHLOROPLASTIC"/>
    <property type="match status" value="1"/>
</dbReference>
<dbReference type="PANTHER" id="PTHR11839">
    <property type="entry name" value="UDP/ADP-SUGAR PYROPHOSPHATASE"/>
    <property type="match status" value="1"/>
</dbReference>
<dbReference type="Pfam" id="PF00293">
    <property type="entry name" value="NUDIX"/>
    <property type="match status" value="1"/>
</dbReference>
<dbReference type="PRINTS" id="PR00502">
    <property type="entry name" value="NUDIXFAMILY"/>
</dbReference>
<dbReference type="SUPFAM" id="SSF55811">
    <property type="entry name" value="Nudix"/>
    <property type="match status" value="1"/>
</dbReference>
<dbReference type="PROSITE" id="PS51462">
    <property type="entry name" value="NUDIX"/>
    <property type="match status" value="1"/>
</dbReference>
<dbReference type="PROSITE" id="PS00893">
    <property type="entry name" value="NUDIX_BOX"/>
    <property type="match status" value="1"/>
</dbReference>
<reference key="1">
    <citation type="journal article" date="2004" name="Proc. Natl. Acad. Sci. U.S.A.">
        <title>The louse-borne human pathogen Bartonella quintana is a genomic derivative of the zoonotic agent Bartonella henselae.</title>
        <authorList>
            <person name="Alsmark U.C.M."/>
            <person name="Frank A.C."/>
            <person name="Karlberg E.O."/>
            <person name="Legault B.-A."/>
            <person name="Ardell D.H."/>
            <person name="Canbaeck B."/>
            <person name="Eriksson A.-S."/>
            <person name="Naeslund A.K."/>
            <person name="Handley S.A."/>
            <person name="Huvet M."/>
            <person name="La Scola B."/>
            <person name="Holmberg M."/>
            <person name="Andersson S.G.E."/>
        </authorList>
    </citation>
    <scope>NUCLEOTIDE SEQUENCE [LARGE SCALE GENOMIC DNA]</scope>
    <source>
        <strain>Toulouse</strain>
    </source>
</reference>